<dbReference type="EMBL" id="AH002397">
    <property type="protein sequence ID" value="AAA46923.1"/>
    <property type="molecule type" value="Genomic_DNA"/>
</dbReference>
<dbReference type="GO" id="GO:0019028">
    <property type="term" value="C:viral capsid"/>
    <property type="evidence" value="ECO:0007669"/>
    <property type="project" value="UniProtKB-KW"/>
</dbReference>
<dbReference type="GO" id="GO:0005198">
    <property type="term" value="F:structural molecule activity"/>
    <property type="evidence" value="ECO:0007669"/>
    <property type="project" value="InterPro"/>
</dbReference>
<dbReference type="GO" id="GO:0046718">
    <property type="term" value="P:symbiont entry into host cell"/>
    <property type="evidence" value="ECO:0007669"/>
    <property type="project" value="UniProtKB-KW"/>
</dbReference>
<dbReference type="GO" id="GO:0019062">
    <property type="term" value="P:virion attachment to host cell"/>
    <property type="evidence" value="ECO:0007669"/>
    <property type="project" value="UniProtKB-KW"/>
</dbReference>
<dbReference type="Gene3D" id="2.60.175.20">
    <property type="entry name" value="Major capsid L1 (late) superfamily, Papillomavirus"/>
    <property type="match status" value="1"/>
</dbReference>
<dbReference type="InterPro" id="IPR002210">
    <property type="entry name" value="Capsid_L1_Papillomavir"/>
</dbReference>
<dbReference type="InterPro" id="IPR036973">
    <property type="entry name" value="Capsid_L1_sf_Papillomavir"/>
</dbReference>
<dbReference type="InterPro" id="IPR011222">
    <property type="entry name" value="dsDNA_vir_gr_I_capsid"/>
</dbReference>
<dbReference type="Pfam" id="PF00500">
    <property type="entry name" value="Late_protein_L1"/>
    <property type="match status" value="1"/>
</dbReference>
<dbReference type="SUPFAM" id="SSF88648">
    <property type="entry name" value="Group I dsDNA viruses"/>
    <property type="match status" value="1"/>
</dbReference>
<organism>
    <name type="scientific">Avian papillomavirus fpv-l</name>
    <dbReference type="NCBI Taxonomy" id="10577"/>
    <lineage>
        <taxon>Viruses</taxon>
        <taxon>Monodnaviria</taxon>
        <taxon>Shotokuvirae</taxon>
        <taxon>Cossaviricota</taxon>
        <taxon>Papovaviricetes</taxon>
        <taxon>Zurhausenvirales</taxon>
        <taxon>Papillomaviridae</taxon>
        <taxon>Firstpapillomavirinae</taxon>
        <taxon>Etapapillomavirus</taxon>
    </lineage>
</organism>
<keyword id="KW-0167">Capsid protein</keyword>
<keyword id="KW-0945">Host-virus interaction</keyword>
<keyword id="KW-0426">Late protein</keyword>
<keyword id="KW-1161">Viral attachment to host cell</keyword>
<keyword id="KW-0946">Virion</keyword>
<keyword id="KW-1160">Virus entry into host cell</keyword>
<protein>
    <recommendedName>
        <fullName>Major capsid protein L1</fullName>
    </recommendedName>
</protein>
<organismHost>
    <name type="scientific">Aves</name>
    <dbReference type="NCBI Taxonomy" id="8782"/>
</organismHost>
<comment type="function">
    <text evidence="1">Forms an icosahedral capsid with a T=7 symmetry and about 55 nm diameter. The capsid is composed of 72 pentamers linked to each other by disulfide bonds and associated with L2 proteins. The capsid encapsulates the genomic DNA, but does not bind DNA. Essential for the initial attachment to the host cell (By similarity).</text>
</comment>
<comment type="subunit">
    <text evidence="1">Self-assembles into homopentamers. The capsid has an icosahedral symmetry and consists of 72 capsomers, with each capsomer being a pentamer of L1. Interacts with the minor capsid protein L2; this interaction is necessary for viral genome encapsidation (By similarity).</text>
</comment>
<comment type="subcellular location">
    <subcellularLocation>
        <location evidence="2">Virion</location>
    </subcellularLocation>
</comment>
<comment type="similarity">
    <text evidence="2">Belongs to the papillomaviridae L1 protein family.</text>
</comment>
<accession>P06456</accession>
<sequence length="110" mass="12523">EPVPETVPIASREQIEKNNSAYMACPSGSVITSDTNLFNRSYWTNNGILWNENLFVTVLDNSRNVIMKISSLAEGAQENNATVYDWKNYYECVRHVEEYGISAIVRLCRV</sequence>
<feature type="chain" id="PRO_0000133481" description="Major capsid protein L1">
    <location>
        <begin position="1" status="less than"/>
        <end position="110" status="greater than"/>
    </location>
</feature>
<feature type="non-terminal residue">
    <location>
        <position position="1"/>
    </location>
</feature>
<feature type="non-terminal residue">
    <location>
        <position position="110"/>
    </location>
</feature>
<name>VL1_FPVL</name>
<reference key="1">
    <citation type="journal article" date="1984" name="J. Virol.">
        <title>Genome of an avian papillomavirus.</title>
        <authorList>
            <person name="Moreno-Lopez J."/>
            <person name="Ahola H."/>
            <person name="Stenlund A."/>
            <person name="Osterhaus A."/>
            <person name="Pettersson U."/>
        </authorList>
    </citation>
    <scope>NUCLEOTIDE SEQUENCE [GENOMIC DNA]</scope>
</reference>
<proteinExistence type="inferred from homology"/>
<evidence type="ECO:0000250" key="1"/>
<evidence type="ECO:0000305" key="2"/>
<gene>
    <name type="primary">L1</name>
</gene>